<keyword id="KW-0002">3D-structure</keyword>
<keyword id="KW-0040">ANK repeat</keyword>
<keyword id="KW-0407">Ion channel</keyword>
<keyword id="KW-0406">Ion transport</keyword>
<keyword id="KW-0472">Membrane</keyword>
<keyword id="KW-0630">Potassium</keyword>
<keyword id="KW-0631">Potassium channel</keyword>
<keyword id="KW-0633">Potassium transport</keyword>
<keyword id="KW-1185">Reference proteome</keyword>
<keyword id="KW-0677">Repeat</keyword>
<keyword id="KW-0812">Transmembrane</keyword>
<keyword id="KW-1133">Transmembrane helix</keyword>
<keyword id="KW-0813">Transport</keyword>
<keyword id="KW-0851">Voltage-gated channel</keyword>
<proteinExistence type="evidence at protein level"/>
<dbReference type="EMBL" id="AJ223357">
    <property type="protein sequence ID" value="CAA11280.1"/>
    <property type="molecule type" value="Genomic_DNA"/>
</dbReference>
<dbReference type="EMBL" id="AJ223358">
    <property type="protein sequence ID" value="CAA11281.1"/>
    <property type="molecule type" value="mRNA"/>
</dbReference>
<dbReference type="EMBL" id="AC018363">
    <property type="protein sequence ID" value="AAF26975.1"/>
    <property type="molecule type" value="Genomic_DNA"/>
</dbReference>
<dbReference type="EMBL" id="CP002686">
    <property type="protein sequence ID" value="AEE73866.1"/>
    <property type="molecule type" value="Genomic_DNA"/>
</dbReference>
<dbReference type="PIR" id="T52046">
    <property type="entry name" value="T52046"/>
</dbReference>
<dbReference type="RefSeq" id="NP_186934.1">
    <property type="nucleotide sequence ID" value="NM_111153.4"/>
</dbReference>
<dbReference type="PDB" id="8JEC">
    <property type="method" value="EM"/>
    <property type="resolution" value="3.10 A"/>
    <property type="chains" value="A/B/C/D=1-828"/>
</dbReference>
<dbReference type="PDB" id="8JET">
    <property type="method" value="EM"/>
    <property type="resolution" value="3.10 A"/>
    <property type="chains" value="A/B/C/D=1-828"/>
</dbReference>
<dbReference type="PDB" id="8JEU">
    <property type="method" value="EM"/>
    <property type="resolution" value="3.50 A"/>
    <property type="chains" value="A/B/C/D=1-828"/>
</dbReference>
<dbReference type="PDB" id="8WTZ">
    <property type="method" value="EM"/>
    <property type="resolution" value="3.10 A"/>
    <property type="chains" value="A/B/C/D=1-828"/>
</dbReference>
<dbReference type="PDB" id="8WUI">
    <property type="method" value="EM"/>
    <property type="resolution" value="3.40 A"/>
    <property type="chains" value="A/B/C/D=1-828"/>
</dbReference>
<dbReference type="PDBsum" id="8JEC"/>
<dbReference type="PDBsum" id="8JET"/>
<dbReference type="PDBsum" id="8JEU"/>
<dbReference type="PDBsum" id="8WTZ"/>
<dbReference type="PDBsum" id="8WUI"/>
<dbReference type="EMDB" id="EMD-36185"/>
<dbReference type="EMDB" id="EMD-36195"/>
<dbReference type="EMDB" id="EMD-36196"/>
<dbReference type="EMDB" id="EMD-36197"/>
<dbReference type="EMDB" id="EMD-36198"/>
<dbReference type="EMDB" id="EMD-36199"/>
<dbReference type="EMDB" id="EMD-37847"/>
<dbReference type="EMDB" id="EMD-37855"/>
<dbReference type="SMR" id="Q9M8S6"/>
<dbReference type="BioGRID" id="6385">
    <property type="interactions" value="2"/>
</dbReference>
<dbReference type="FunCoup" id="Q9M8S6">
    <property type="interactions" value="216"/>
</dbReference>
<dbReference type="IntAct" id="Q9M8S6">
    <property type="interactions" value="1"/>
</dbReference>
<dbReference type="STRING" id="3702.Q9M8S6"/>
<dbReference type="TCDB" id="1.A.1.4.5">
    <property type="family name" value="the voltage-gated ion channel (vic) superfamily"/>
</dbReference>
<dbReference type="PaxDb" id="3702-AT3G02850.1"/>
<dbReference type="ProteomicsDB" id="232637"/>
<dbReference type="EnsemblPlants" id="AT3G02850.1">
    <property type="protein sequence ID" value="AT3G02850.1"/>
    <property type="gene ID" value="AT3G02850"/>
</dbReference>
<dbReference type="GeneID" id="821052"/>
<dbReference type="Gramene" id="AT3G02850.1">
    <property type="protein sequence ID" value="AT3G02850.1"/>
    <property type="gene ID" value="AT3G02850"/>
</dbReference>
<dbReference type="KEGG" id="ath:AT3G02850"/>
<dbReference type="Araport" id="AT3G02850"/>
<dbReference type="TAIR" id="AT3G02850">
    <property type="gene designation" value="SKOR"/>
</dbReference>
<dbReference type="eggNOG" id="KOG0498">
    <property type="taxonomic scope" value="Eukaryota"/>
</dbReference>
<dbReference type="HOGENOM" id="CLU_005746_8_3_1"/>
<dbReference type="InParanoid" id="Q9M8S6"/>
<dbReference type="OrthoDB" id="426293at2759"/>
<dbReference type="PhylomeDB" id="Q9M8S6"/>
<dbReference type="BioCyc" id="ARA:AT3G02850-MONOMER"/>
<dbReference type="BioCyc" id="MetaCyc:MONOMER-14560"/>
<dbReference type="PRO" id="PR:Q9M8S6"/>
<dbReference type="Proteomes" id="UP000006548">
    <property type="component" value="Chromosome 3"/>
</dbReference>
<dbReference type="ExpressionAtlas" id="Q9M8S6">
    <property type="expression patterns" value="baseline and differential"/>
</dbReference>
<dbReference type="GO" id="GO:0034702">
    <property type="term" value="C:monoatomic ion channel complex"/>
    <property type="evidence" value="ECO:0007669"/>
    <property type="project" value="UniProtKB-KW"/>
</dbReference>
<dbReference type="GO" id="GO:0015271">
    <property type="term" value="F:outward rectifier potassium channel activity"/>
    <property type="evidence" value="ECO:0000314"/>
    <property type="project" value="TAIR"/>
</dbReference>
<dbReference type="GO" id="GO:0055075">
    <property type="term" value="P:potassium ion homeostasis"/>
    <property type="evidence" value="ECO:0000315"/>
    <property type="project" value="TAIR"/>
</dbReference>
<dbReference type="GO" id="GO:0006813">
    <property type="term" value="P:potassium ion transport"/>
    <property type="evidence" value="ECO:0000314"/>
    <property type="project" value="TAIR"/>
</dbReference>
<dbReference type="CDD" id="cd00038">
    <property type="entry name" value="CAP_ED"/>
    <property type="match status" value="1"/>
</dbReference>
<dbReference type="FunFam" id="1.25.40.20:FF:000563">
    <property type="entry name" value="Gated outwardly-rectifying K+ channel"/>
    <property type="match status" value="1"/>
</dbReference>
<dbReference type="FunFam" id="2.60.120.10:FF:000074">
    <property type="entry name" value="Potassium channel KAT2"/>
    <property type="match status" value="1"/>
</dbReference>
<dbReference type="FunFam" id="1.10.287.70:FF:000139">
    <property type="entry name" value="Potassium channel SKOR"/>
    <property type="match status" value="1"/>
</dbReference>
<dbReference type="Gene3D" id="1.10.287.70">
    <property type="match status" value="1"/>
</dbReference>
<dbReference type="Gene3D" id="1.25.40.20">
    <property type="entry name" value="Ankyrin repeat-containing domain"/>
    <property type="match status" value="2"/>
</dbReference>
<dbReference type="Gene3D" id="1.10.287.630">
    <property type="entry name" value="Helix hairpin bin"/>
    <property type="match status" value="1"/>
</dbReference>
<dbReference type="Gene3D" id="2.60.120.10">
    <property type="entry name" value="Jelly Rolls"/>
    <property type="match status" value="1"/>
</dbReference>
<dbReference type="InterPro" id="IPR002110">
    <property type="entry name" value="Ankyrin_rpt"/>
</dbReference>
<dbReference type="InterPro" id="IPR036770">
    <property type="entry name" value="Ankyrin_rpt-contain_sf"/>
</dbReference>
<dbReference type="InterPro" id="IPR000595">
    <property type="entry name" value="cNMP-bd_dom"/>
</dbReference>
<dbReference type="InterPro" id="IPR018490">
    <property type="entry name" value="cNMP-bd_dom_sf"/>
</dbReference>
<dbReference type="InterPro" id="IPR005821">
    <property type="entry name" value="Ion_trans_dom"/>
</dbReference>
<dbReference type="InterPro" id="IPR003938">
    <property type="entry name" value="K_chnl_volt-dep_EAG/ELK/ERG"/>
</dbReference>
<dbReference type="InterPro" id="IPR045319">
    <property type="entry name" value="KAT/AKT"/>
</dbReference>
<dbReference type="InterPro" id="IPR021789">
    <property type="entry name" value="KHA_dom"/>
</dbReference>
<dbReference type="InterPro" id="IPR014710">
    <property type="entry name" value="RmlC-like_jellyroll"/>
</dbReference>
<dbReference type="PANTHER" id="PTHR45743">
    <property type="entry name" value="POTASSIUM CHANNEL AKT1"/>
    <property type="match status" value="1"/>
</dbReference>
<dbReference type="PANTHER" id="PTHR45743:SF3">
    <property type="entry name" value="POTASSIUM CHANNEL SKOR"/>
    <property type="match status" value="1"/>
</dbReference>
<dbReference type="Pfam" id="PF12796">
    <property type="entry name" value="Ank_2"/>
    <property type="match status" value="2"/>
</dbReference>
<dbReference type="Pfam" id="PF00027">
    <property type="entry name" value="cNMP_binding"/>
    <property type="match status" value="1"/>
</dbReference>
<dbReference type="Pfam" id="PF00520">
    <property type="entry name" value="Ion_trans"/>
    <property type="match status" value="1"/>
</dbReference>
<dbReference type="Pfam" id="PF11834">
    <property type="entry name" value="KHA"/>
    <property type="match status" value="1"/>
</dbReference>
<dbReference type="PRINTS" id="PR01415">
    <property type="entry name" value="ANKYRIN"/>
</dbReference>
<dbReference type="PRINTS" id="PR01463">
    <property type="entry name" value="EAGCHANLFMLY"/>
</dbReference>
<dbReference type="SMART" id="SM00248">
    <property type="entry name" value="ANK"/>
    <property type="match status" value="5"/>
</dbReference>
<dbReference type="SMART" id="SM00100">
    <property type="entry name" value="cNMP"/>
    <property type="match status" value="1"/>
</dbReference>
<dbReference type="SUPFAM" id="SSF48403">
    <property type="entry name" value="Ankyrin repeat"/>
    <property type="match status" value="1"/>
</dbReference>
<dbReference type="SUPFAM" id="SSF51206">
    <property type="entry name" value="cAMP-binding domain-like"/>
    <property type="match status" value="1"/>
</dbReference>
<dbReference type="SUPFAM" id="SSF81324">
    <property type="entry name" value="Voltage-gated potassium channels"/>
    <property type="match status" value="1"/>
</dbReference>
<dbReference type="PROSITE" id="PS50297">
    <property type="entry name" value="ANK_REP_REGION"/>
    <property type="match status" value="1"/>
</dbReference>
<dbReference type="PROSITE" id="PS50088">
    <property type="entry name" value="ANK_REPEAT"/>
    <property type="match status" value="3"/>
</dbReference>
<dbReference type="PROSITE" id="PS50042">
    <property type="entry name" value="CNMP_BINDING_3"/>
    <property type="match status" value="1"/>
</dbReference>
<dbReference type="PROSITE" id="PS51490">
    <property type="entry name" value="KHA"/>
    <property type="match status" value="1"/>
</dbReference>
<protein>
    <recommendedName>
        <fullName>Potassium channel SKOR</fullName>
    </recommendedName>
    <alternativeName>
        <fullName>Stelar K(+) outward rectifying channel</fullName>
    </alternativeName>
</protein>
<feature type="chain" id="PRO_0000054128" description="Potassium channel SKOR">
    <location>
        <begin position="1"/>
        <end position="828"/>
    </location>
</feature>
<feature type="topological domain" description="Cytoplasmic" evidence="2">
    <location>
        <begin position="1"/>
        <end position="86"/>
    </location>
</feature>
<feature type="transmembrane region" description="Helical; Name=Segment S1" evidence="2">
    <location>
        <begin position="87"/>
        <end position="107"/>
    </location>
</feature>
<feature type="topological domain" description="Extracellular" evidence="2">
    <location>
        <begin position="108"/>
        <end position="114"/>
    </location>
</feature>
<feature type="transmembrane region" description="Helical; Name=Segment S2" evidence="2">
    <location>
        <begin position="115"/>
        <end position="135"/>
    </location>
</feature>
<feature type="topological domain" description="Cytoplasmic" evidence="2">
    <location>
        <begin position="136"/>
        <end position="158"/>
    </location>
</feature>
<feature type="transmembrane region" description="Helical; Name=Segment S3" evidence="2">
    <location>
        <begin position="159"/>
        <end position="179"/>
    </location>
</feature>
<feature type="topological domain" description="Extracellular" evidence="2">
    <location>
        <begin position="180"/>
        <end position="185"/>
    </location>
</feature>
<feature type="transmembrane region" description="Helical; Voltage-sensor; Name=Segment S4" evidence="2">
    <location>
        <begin position="186"/>
        <end position="206"/>
    </location>
</feature>
<feature type="topological domain" description="Cytoplasmic" evidence="2">
    <location>
        <begin position="207"/>
        <end position="220"/>
    </location>
</feature>
<feature type="transmembrane region" description="Helical; Name=Segment S5" evidence="2">
    <location>
        <begin position="221"/>
        <end position="241"/>
    </location>
</feature>
<feature type="topological domain" description="Extracellular" evidence="2">
    <location>
        <begin position="242"/>
        <end position="276"/>
    </location>
</feature>
<feature type="intramembrane region" description="Pore-forming; Name=Segment H5" evidence="2">
    <location>
        <begin position="277"/>
        <end position="296"/>
    </location>
</feature>
<feature type="topological domain" description="Extracellular" evidence="2">
    <location>
        <begin position="297"/>
        <end position="300"/>
    </location>
</feature>
<feature type="transmembrane region" description="Helical; Name=Segment S6" evidence="2">
    <location>
        <begin position="301"/>
        <end position="321"/>
    </location>
</feature>
<feature type="topological domain" description="Cytoplasmic" evidence="2">
    <location>
        <begin position="322"/>
        <end position="828"/>
    </location>
</feature>
<feature type="repeat" description="ANK 1">
    <location>
        <begin position="545"/>
        <end position="576"/>
    </location>
</feature>
<feature type="repeat" description="ANK 2">
    <location>
        <begin position="580"/>
        <end position="609"/>
    </location>
</feature>
<feature type="repeat" description="ANK 3">
    <location>
        <begin position="613"/>
        <end position="642"/>
    </location>
</feature>
<feature type="repeat" description="ANK 4">
    <location>
        <begin position="644"/>
        <end position="673"/>
    </location>
</feature>
<feature type="repeat" description="ANK 5">
    <location>
        <begin position="677"/>
        <end position="706"/>
    </location>
</feature>
<feature type="repeat" description="ANK 6">
    <location>
        <begin position="710"/>
        <end position="740"/>
    </location>
</feature>
<feature type="domain" description="KHA" evidence="3">
    <location>
        <begin position="756"/>
        <end position="828"/>
    </location>
</feature>
<feature type="binding site">
    <location>
        <begin position="403"/>
        <end position="523"/>
    </location>
    <ligand>
        <name>a nucleoside 3',5'-cyclic phosphate</name>
        <dbReference type="ChEBI" id="CHEBI:58464"/>
    </ligand>
</feature>
<feature type="sequence conflict" description="In Ref. 1; CAA11281." evidence="6" ref="1">
    <original>E</original>
    <variation>R</variation>
    <location>
        <position position="16"/>
    </location>
</feature>
<feature type="sequence conflict" description="In Ref. 1; CAA11280/CAA11281." evidence="6" ref="1">
    <original>EL</original>
    <variation>DV</variation>
    <location>
        <begin position="547"/>
        <end position="548"/>
    </location>
</feature>
<feature type="helix" evidence="7">
    <location>
        <begin position="80"/>
        <end position="106"/>
    </location>
</feature>
<feature type="turn" evidence="7">
    <location>
        <begin position="112"/>
        <end position="114"/>
    </location>
</feature>
<feature type="helix" evidence="7">
    <location>
        <begin position="115"/>
        <end position="134"/>
    </location>
</feature>
<feature type="strand" evidence="7">
    <location>
        <begin position="137"/>
        <end position="139"/>
    </location>
</feature>
<feature type="turn" evidence="7">
    <location>
        <begin position="140"/>
        <end position="143"/>
    </location>
</feature>
<feature type="strand" evidence="7">
    <location>
        <begin position="144"/>
        <end position="146"/>
    </location>
</feature>
<feature type="helix" evidence="7">
    <location>
        <begin position="149"/>
        <end position="158"/>
    </location>
</feature>
<feature type="helix" evidence="7">
    <location>
        <begin position="162"/>
        <end position="168"/>
    </location>
</feature>
<feature type="helix" evidence="7">
    <location>
        <begin position="171"/>
        <end position="177"/>
    </location>
</feature>
<feature type="turn" evidence="8">
    <location>
        <begin position="178"/>
        <end position="180"/>
    </location>
</feature>
<feature type="helix" evidence="7">
    <location>
        <begin position="182"/>
        <end position="185"/>
    </location>
</feature>
<feature type="helix" evidence="7">
    <location>
        <begin position="186"/>
        <end position="194"/>
    </location>
</feature>
<feature type="helix" evidence="7">
    <location>
        <begin position="195"/>
        <end position="207"/>
    </location>
</feature>
<feature type="strand" evidence="7">
    <location>
        <begin position="209"/>
        <end position="211"/>
    </location>
</feature>
<feature type="helix" evidence="7">
    <location>
        <begin position="213"/>
        <end position="241"/>
    </location>
</feature>
<feature type="helix" evidence="7">
    <location>
        <begin position="245"/>
        <end position="250"/>
    </location>
</feature>
<feature type="turn" evidence="7">
    <location>
        <begin position="252"/>
        <end position="255"/>
    </location>
</feature>
<feature type="helix" evidence="7">
    <location>
        <begin position="266"/>
        <end position="268"/>
    </location>
</feature>
<feature type="helix" evidence="7">
    <location>
        <begin position="271"/>
        <end position="286"/>
    </location>
</feature>
<feature type="strand" evidence="7">
    <location>
        <begin position="292"/>
        <end position="294"/>
    </location>
</feature>
<feature type="helix" evidence="7">
    <location>
        <begin position="299"/>
        <end position="328"/>
    </location>
</feature>
<feature type="helix" evidence="7">
    <location>
        <begin position="332"/>
        <end position="348"/>
    </location>
</feature>
<feature type="helix" evidence="7">
    <location>
        <begin position="356"/>
        <end position="378"/>
    </location>
</feature>
<feature type="helix" evidence="7">
    <location>
        <begin position="383"/>
        <end position="399"/>
    </location>
</feature>
<feature type="turn" evidence="7">
    <location>
        <begin position="403"/>
        <end position="406"/>
    </location>
</feature>
<feature type="helix" evidence="7">
    <location>
        <begin position="409"/>
        <end position="416"/>
    </location>
</feature>
<feature type="strand" evidence="7">
    <location>
        <begin position="420"/>
        <end position="424"/>
    </location>
</feature>
<feature type="strand" evidence="8">
    <location>
        <begin position="429"/>
        <end position="431"/>
    </location>
</feature>
<feature type="strand" evidence="7">
    <location>
        <begin position="439"/>
        <end position="446"/>
    </location>
</feature>
<feature type="strand" evidence="7">
    <location>
        <begin position="448"/>
        <end position="451"/>
    </location>
</feature>
<feature type="strand" evidence="7">
    <location>
        <begin position="461"/>
        <end position="465"/>
    </location>
</feature>
<feature type="strand" evidence="8">
    <location>
        <begin position="470"/>
        <end position="472"/>
    </location>
</feature>
<feature type="helix" evidence="7">
    <location>
        <begin position="473"/>
        <end position="477"/>
    </location>
</feature>
<feature type="strand" evidence="7">
    <location>
        <begin position="483"/>
        <end position="490"/>
    </location>
</feature>
<feature type="strand" evidence="7">
    <location>
        <begin position="492"/>
        <end position="498"/>
    </location>
</feature>
<feature type="helix" evidence="7">
    <location>
        <begin position="499"/>
        <end position="508"/>
    </location>
</feature>
<feature type="helix" evidence="7">
    <location>
        <begin position="510"/>
        <end position="523"/>
    </location>
</feature>
<feature type="turn" evidence="8">
    <location>
        <begin position="528"/>
        <end position="530"/>
    </location>
</feature>
<feature type="helix" evidence="8">
    <location>
        <begin position="533"/>
        <end position="544"/>
    </location>
</feature>
<accession>Q9M8S6</accession>
<accession>O82630</accession>
<accession>Q9SB86</accession>
<name>SKOR_ARATH</name>
<evidence type="ECO:0000250" key="1"/>
<evidence type="ECO:0000255" key="2"/>
<evidence type="ECO:0000255" key="3">
    <source>
        <dbReference type="PROSITE-ProRule" id="PRU00823"/>
    </source>
</evidence>
<evidence type="ECO:0000269" key="4">
    <source>
    </source>
</evidence>
<evidence type="ECO:0000269" key="5">
    <source>
    </source>
</evidence>
<evidence type="ECO:0000305" key="6"/>
<evidence type="ECO:0007829" key="7">
    <source>
        <dbReference type="PDB" id="8WTZ"/>
    </source>
</evidence>
<evidence type="ECO:0007829" key="8">
    <source>
        <dbReference type="PDB" id="8WUI"/>
    </source>
</evidence>
<organism>
    <name type="scientific">Arabidopsis thaliana</name>
    <name type="common">Mouse-ear cress</name>
    <dbReference type="NCBI Taxonomy" id="3702"/>
    <lineage>
        <taxon>Eukaryota</taxon>
        <taxon>Viridiplantae</taxon>
        <taxon>Streptophyta</taxon>
        <taxon>Embryophyta</taxon>
        <taxon>Tracheophyta</taxon>
        <taxon>Spermatophyta</taxon>
        <taxon>Magnoliopsida</taxon>
        <taxon>eudicotyledons</taxon>
        <taxon>Gunneridae</taxon>
        <taxon>Pentapetalae</taxon>
        <taxon>rosids</taxon>
        <taxon>malvids</taxon>
        <taxon>Brassicales</taxon>
        <taxon>Brassicaceae</taxon>
        <taxon>Camelineae</taxon>
        <taxon>Arabidopsis</taxon>
    </lineage>
</organism>
<reference key="1">
    <citation type="journal article" date="1998" name="Cell">
        <title>Identification and disruption of a plant shaker-like outward channel involved in K+ release into the xylem sap.</title>
        <authorList>
            <person name="Gaymard F."/>
            <person name="Pilot G."/>
            <person name="Lacombe B."/>
            <person name="Bouchez D."/>
            <person name="Bruneau D."/>
            <person name="Boucherez J."/>
            <person name="Michaux-Ferriere N."/>
            <person name="Thibaud J.-B."/>
            <person name="Sentenac H."/>
        </authorList>
    </citation>
    <scope>NUCLEOTIDE SEQUENCE [GENOMIC DNA / MRNA]</scope>
    <scope>TISSUE SPECIFICITY</scope>
    <scope>CHARACTERIZATION</scope>
    <scope>FUNCTION</scope>
    <source>
        <strain>cv. Landsberg erecta</strain>
    </source>
</reference>
<reference key="2">
    <citation type="journal article" date="2000" name="Nature">
        <title>Sequence and analysis of chromosome 3 of the plant Arabidopsis thaliana.</title>
        <authorList>
            <person name="Salanoubat M."/>
            <person name="Lemcke K."/>
            <person name="Rieger M."/>
            <person name="Ansorge W."/>
            <person name="Unseld M."/>
            <person name="Fartmann B."/>
            <person name="Valle G."/>
            <person name="Bloecker H."/>
            <person name="Perez-Alonso M."/>
            <person name="Obermaier B."/>
            <person name="Delseny M."/>
            <person name="Boutry M."/>
            <person name="Grivell L.A."/>
            <person name="Mache R."/>
            <person name="Puigdomenech P."/>
            <person name="De Simone V."/>
            <person name="Choisne N."/>
            <person name="Artiguenave F."/>
            <person name="Robert C."/>
            <person name="Brottier P."/>
            <person name="Wincker P."/>
            <person name="Cattolico L."/>
            <person name="Weissenbach J."/>
            <person name="Saurin W."/>
            <person name="Quetier F."/>
            <person name="Schaefer M."/>
            <person name="Mueller-Auer S."/>
            <person name="Gabel C."/>
            <person name="Fuchs M."/>
            <person name="Benes V."/>
            <person name="Wurmbach E."/>
            <person name="Drzonek H."/>
            <person name="Erfle H."/>
            <person name="Jordan N."/>
            <person name="Bangert S."/>
            <person name="Wiedelmann R."/>
            <person name="Kranz H."/>
            <person name="Voss H."/>
            <person name="Holland R."/>
            <person name="Brandt P."/>
            <person name="Nyakatura G."/>
            <person name="Vezzi A."/>
            <person name="D'Angelo M."/>
            <person name="Pallavicini A."/>
            <person name="Toppo S."/>
            <person name="Simionati B."/>
            <person name="Conrad A."/>
            <person name="Hornischer K."/>
            <person name="Kauer G."/>
            <person name="Loehnert T.-H."/>
            <person name="Nordsiek G."/>
            <person name="Reichelt J."/>
            <person name="Scharfe M."/>
            <person name="Schoen O."/>
            <person name="Bargues M."/>
            <person name="Terol J."/>
            <person name="Climent J."/>
            <person name="Navarro P."/>
            <person name="Collado C."/>
            <person name="Perez-Perez A."/>
            <person name="Ottenwaelder B."/>
            <person name="Duchemin D."/>
            <person name="Cooke R."/>
            <person name="Laudie M."/>
            <person name="Berger-Llauro C."/>
            <person name="Purnelle B."/>
            <person name="Masuy D."/>
            <person name="de Haan M."/>
            <person name="Maarse A.C."/>
            <person name="Alcaraz J.-P."/>
            <person name="Cottet A."/>
            <person name="Casacuberta E."/>
            <person name="Monfort A."/>
            <person name="Argiriou A."/>
            <person name="Flores M."/>
            <person name="Liguori R."/>
            <person name="Vitale D."/>
            <person name="Mannhaupt G."/>
            <person name="Haase D."/>
            <person name="Schoof H."/>
            <person name="Rudd S."/>
            <person name="Zaccaria P."/>
            <person name="Mewes H.-W."/>
            <person name="Mayer K.F.X."/>
            <person name="Kaul S."/>
            <person name="Town C.D."/>
            <person name="Koo H.L."/>
            <person name="Tallon L.J."/>
            <person name="Jenkins J."/>
            <person name="Rooney T."/>
            <person name="Rizzo M."/>
            <person name="Walts A."/>
            <person name="Utterback T."/>
            <person name="Fujii C.Y."/>
            <person name="Shea T.P."/>
            <person name="Creasy T.H."/>
            <person name="Haas B."/>
            <person name="Maiti R."/>
            <person name="Wu D."/>
            <person name="Peterson J."/>
            <person name="Van Aken S."/>
            <person name="Pai G."/>
            <person name="Militscher J."/>
            <person name="Sellers P."/>
            <person name="Gill J.E."/>
            <person name="Feldblyum T.V."/>
            <person name="Preuss D."/>
            <person name="Lin X."/>
            <person name="Nierman W.C."/>
            <person name="Salzberg S.L."/>
            <person name="White O."/>
            <person name="Venter J.C."/>
            <person name="Fraser C.M."/>
            <person name="Kaneko T."/>
            <person name="Nakamura Y."/>
            <person name="Sato S."/>
            <person name="Kato T."/>
            <person name="Asamizu E."/>
            <person name="Sasamoto S."/>
            <person name="Kimura T."/>
            <person name="Idesawa K."/>
            <person name="Kawashima K."/>
            <person name="Kishida Y."/>
            <person name="Kiyokawa C."/>
            <person name="Kohara M."/>
            <person name="Matsumoto M."/>
            <person name="Matsuno A."/>
            <person name="Muraki A."/>
            <person name="Nakayama S."/>
            <person name="Nakazaki N."/>
            <person name="Shinpo S."/>
            <person name="Takeuchi C."/>
            <person name="Wada T."/>
            <person name="Watanabe A."/>
            <person name="Yamada M."/>
            <person name="Yasuda M."/>
            <person name="Tabata S."/>
        </authorList>
    </citation>
    <scope>NUCLEOTIDE SEQUENCE [LARGE SCALE GENOMIC DNA]</scope>
    <source>
        <strain>cv. Columbia</strain>
    </source>
</reference>
<reference key="3">
    <citation type="journal article" date="2017" name="Plant J.">
        <title>Araport11: a complete reannotation of the Arabidopsis thaliana reference genome.</title>
        <authorList>
            <person name="Cheng C.Y."/>
            <person name="Krishnakumar V."/>
            <person name="Chan A.P."/>
            <person name="Thibaud-Nissen F."/>
            <person name="Schobel S."/>
            <person name="Town C.D."/>
        </authorList>
    </citation>
    <scope>GENOME REANNOTATION</scope>
    <source>
        <strain>cv. Columbia</strain>
    </source>
</reference>
<reference key="4">
    <citation type="journal article" date="2000" name="FEBS Lett.">
        <title>pH control of the plant outwardly-rectifying potassium channel SKOR.</title>
        <authorList>
            <person name="Lacombe B."/>
            <person name="Pilot G."/>
            <person name="Gaymard F."/>
            <person name="Sentenac H."/>
            <person name="Thibaud J.-B."/>
        </authorList>
    </citation>
    <scope>PROTON SENSITIVITY</scope>
</reference>
<reference key="5">
    <citation type="journal article" date="2001" name="Plant Physiol.">
        <title>Phylogenetic relationships within cation transporter families of Arabidopsis.</title>
        <authorList>
            <person name="Maeser P."/>
            <person name="Thomine S."/>
            <person name="Schroeder J.I."/>
            <person name="Ward J.M."/>
            <person name="Hirschi K."/>
            <person name="Sze H."/>
            <person name="Talke I.N."/>
            <person name="Amtmann A."/>
            <person name="Maathuis F.J.M."/>
            <person name="Sanders D."/>
            <person name="Harper J.F."/>
            <person name="Tchieu J."/>
            <person name="Gribskov M."/>
            <person name="Persans M.W."/>
            <person name="Salt D.E."/>
            <person name="Kim S.A."/>
            <person name="Guerinot M.L."/>
        </authorList>
    </citation>
    <scope>GENE FAMILY</scope>
    <scope>NOMENCLATURE</scope>
</reference>
<reference key="6">
    <citation type="journal article" date="2003" name="Plant Mol. Biol.">
        <title>Regulated expression of Arabidopsis shaker K(+) channel genes involved in K(+) uptake and distribution in the plant.</title>
        <authorList>
            <person name="Pilot G."/>
            <person name="Gaymard F."/>
            <person name="Mouline K."/>
            <person name="Cherel I."/>
            <person name="Sentenac H."/>
        </authorList>
    </citation>
    <scope>INDUCTION</scope>
</reference>
<comment type="function">
    <text evidence="5">Highly selective outward-rectifying potassium channel. Involved in potassium release into the xylem sap toward the shoots. Assuming opened or closed conformations in response to the voltage difference across the membrane, the channel is activated by depolarization. The voltage-dependence of the channel is abolished by internal or external acidification. May interact with the cytoskeleton or with regulatory proteins.</text>
</comment>
<comment type="subunit">
    <text evidence="1">The potassium channel is probably composed of a homo- or heterotetrameric complex of pore-forming subunits.</text>
</comment>
<comment type="subcellular location">
    <subcellularLocation>
        <location>Membrane</location>
        <topology>Multi-pass membrane protein</topology>
    </subcellularLocation>
</comment>
<comment type="tissue specificity">
    <text evidence="5">Expressed in root pericycle and xylem parenchyma, and in flower at a lower level.</text>
</comment>
<comment type="induction">
    <text evidence="4">In roots, strongly inhibited by 2,4-dichlorophenoxyacetic acid (2,4-D), abscisic acid (ABA) and benzyladenine (BA) treatment or by potassium starvation.</text>
</comment>
<comment type="domain">
    <text>The segment S4 is probably the voltage-sensor and is characterized by a series of positively charged amino acids. The pore-forming region H5 is enclosed by the transmembrane segments S5 and S6 in the Shaker-type (1P/6TM) and contains the GYGD signature motif which seems to be involved in potassium selectivity.</text>
</comment>
<comment type="domain">
    <text>The KHA domain (rich in hydrophobic and acidic residues) present in the C-terminal part is likely to be important for tetramerization.</text>
</comment>
<comment type="miscellaneous">
    <text>Loss-of-function mutation skor-1 leads to a reduced shoot potassium content.</text>
</comment>
<comment type="similarity">
    <text evidence="6">Belongs to the potassium channel family. Plant (TC 1.A.1.4) subfamily.</text>
</comment>
<sequence>MGGSSGGGVSYRSGGESDVELEDYEVDDFRDGIVESRGNRFNPLTNFLGLDFAGGSGGKFTVINGIRDISRGSIVHPDNRWYKAWTMFILIWALYSSFFTPLEFGFFRGLPENLFILDIAGQIAFLVDIVLTFFVAYRDSRTYRMIYKRSSIALRYLKSTFIIDLLACMPWDIIYKAAGEKEEVRYLLLIRLYRVHRVILFFHKMEKDIRINYLFTRIVKLIFVELYCTHTAACIFYYLATTLPASQEGYTWIGSLKLGDYSYSKFREIDLWTRYTTSMYFAVVTMATVGYGDIHAVNMREMIFAMVYISFDMILGAYLIGNMTALIVKGSKTERFRDKMADIMRYMNRNKLGRNIRGQITGHLRLQYESSYTEAAVLQDIPVSIRAKIAQTLYLPYIEKVPLFRGCSSEFINQIVIRLHEEFFLPGEVIMEQGSVVDQLYFVCHGVLEEIGITKDGSEEIVAVLQPDHSFGEISILCNIPQPYTVRVAELCRILRLDKQSFMNILEIFFHDGRRILNNLLEGKESNVRIKQLESDITFHISKQEAELALKLNSAAFYGDLYQLKSLIRAGGDPNKTDYDGRSPLHLAASRGYEDITLYLIQESVDVNIKDKLGSTPLLEAIKNGNDRVAALLVKEGATLNIENAGTFLCTVVAKGDSDFLKRLLSNGIDPNSKDYDHRTPLHVAASEGFYVLAIQLVEASANVLAKDRWGNTPLDEALGCGNKMLIKLLEDAKNSQISSFPSGSKEPKDKVYKKKCTVYFSHPGDSKEKRRRGIVLWVPRSIEELIRTAKEQLNVPEASCVLSEDEAKIIDVDLISDGQKLYLAVET</sequence>
<gene>
    <name type="primary">SKOR</name>
    <name type="ordered locus">At3g02850</name>
    <name type="ORF">F13E7.21</name>
</gene>